<protein>
    <recommendedName>
        <fullName evidence="1">Pyrrolidone-carboxylate peptidase</fullName>
        <ecNumber evidence="1">3.4.19.3</ecNumber>
    </recommendedName>
    <alternativeName>
        <fullName evidence="1">5-oxoprolyl-peptidase</fullName>
    </alternativeName>
    <alternativeName>
        <fullName evidence="1">Pyroglutamyl-peptidase I</fullName>
        <shortName evidence="1">PGP-I</shortName>
        <shortName evidence="1">Pyrase</shortName>
    </alternativeName>
</protein>
<proteinExistence type="inferred from homology"/>
<accession>Q04L55</accession>
<evidence type="ECO:0000255" key="1">
    <source>
        <dbReference type="HAMAP-Rule" id="MF_00417"/>
    </source>
</evidence>
<name>PCP_STRP2</name>
<gene>
    <name evidence="1" type="primary">pcp</name>
    <name type="ordered locus">SPD_0753</name>
</gene>
<sequence length="214" mass="23420">MKILVTGFNPFGGEKINPALEAVKLLPSEINGAEVRWVEIPTVFYKSSEVLEAEILRYQPDAVLCIGQAGGRTGLTPERVAINQDDARIPDNEGNQPIDTPIRIDGASAYFSSLPIKAMVQAIKKQGLPAVVSNSAGTFVCNHLMYQALYLVDKKFPNMRAGFMHIPYMMEQVVNKPNTAGMSLCDIVRGIEVAIEAIVDYKDKDLQLVGGETH</sequence>
<reference key="1">
    <citation type="journal article" date="2007" name="J. Bacteriol.">
        <title>Genome sequence of Avery's virulent serotype 2 strain D39 of Streptococcus pneumoniae and comparison with that of unencapsulated laboratory strain R6.</title>
        <authorList>
            <person name="Lanie J.A."/>
            <person name="Ng W.-L."/>
            <person name="Kazmierczak K.M."/>
            <person name="Andrzejewski T.M."/>
            <person name="Davidsen T.M."/>
            <person name="Wayne K.J."/>
            <person name="Tettelin H."/>
            <person name="Glass J.I."/>
            <person name="Winkler M.E."/>
        </authorList>
    </citation>
    <scope>NUCLEOTIDE SEQUENCE [LARGE SCALE GENOMIC DNA]</scope>
    <source>
        <strain>D39 / NCTC 7466</strain>
    </source>
</reference>
<dbReference type="EC" id="3.4.19.3" evidence="1"/>
<dbReference type="EMBL" id="CP000410">
    <property type="protein sequence ID" value="ABJ53760.1"/>
    <property type="molecule type" value="Genomic_DNA"/>
</dbReference>
<dbReference type="RefSeq" id="WP_000699369.1">
    <property type="nucleotide sequence ID" value="NZ_JAMLJR010000025.1"/>
</dbReference>
<dbReference type="SMR" id="Q04L55"/>
<dbReference type="MEROPS" id="C15.001"/>
<dbReference type="PaxDb" id="373153-SPD_0753"/>
<dbReference type="GeneID" id="45653786"/>
<dbReference type="KEGG" id="spd:SPD_0753"/>
<dbReference type="eggNOG" id="COG2039">
    <property type="taxonomic scope" value="Bacteria"/>
</dbReference>
<dbReference type="HOGENOM" id="CLU_043960_4_0_9"/>
<dbReference type="BioCyc" id="SPNE373153:G1G6V-827-MONOMER"/>
<dbReference type="Proteomes" id="UP000001452">
    <property type="component" value="Chromosome"/>
</dbReference>
<dbReference type="GO" id="GO:0005829">
    <property type="term" value="C:cytosol"/>
    <property type="evidence" value="ECO:0007669"/>
    <property type="project" value="InterPro"/>
</dbReference>
<dbReference type="GO" id="GO:0016920">
    <property type="term" value="F:pyroglutamyl-peptidase activity"/>
    <property type="evidence" value="ECO:0007669"/>
    <property type="project" value="UniProtKB-UniRule"/>
</dbReference>
<dbReference type="GO" id="GO:0006508">
    <property type="term" value="P:proteolysis"/>
    <property type="evidence" value="ECO:0007669"/>
    <property type="project" value="UniProtKB-KW"/>
</dbReference>
<dbReference type="CDD" id="cd00501">
    <property type="entry name" value="Peptidase_C15"/>
    <property type="match status" value="1"/>
</dbReference>
<dbReference type="FunFam" id="3.40.630.20:FF:000001">
    <property type="entry name" value="Pyrrolidone-carboxylate peptidase"/>
    <property type="match status" value="1"/>
</dbReference>
<dbReference type="Gene3D" id="3.40.630.20">
    <property type="entry name" value="Peptidase C15, pyroglutamyl peptidase I-like"/>
    <property type="match status" value="1"/>
</dbReference>
<dbReference type="HAMAP" id="MF_00417">
    <property type="entry name" value="Pyrrolid_peptidase"/>
    <property type="match status" value="1"/>
</dbReference>
<dbReference type="InterPro" id="IPR000816">
    <property type="entry name" value="Peptidase_C15"/>
</dbReference>
<dbReference type="InterPro" id="IPR016125">
    <property type="entry name" value="Peptidase_C15-like"/>
</dbReference>
<dbReference type="InterPro" id="IPR036440">
    <property type="entry name" value="Peptidase_C15-like_sf"/>
</dbReference>
<dbReference type="InterPro" id="IPR029762">
    <property type="entry name" value="PGP-I_bact-type"/>
</dbReference>
<dbReference type="InterPro" id="IPR033694">
    <property type="entry name" value="PGPEP1_Cys_AS"/>
</dbReference>
<dbReference type="InterPro" id="IPR033693">
    <property type="entry name" value="PGPEP1_Glu_AS"/>
</dbReference>
<dbReference type="NCBIfam" id="NF009676">
    <property type="entry name" value="PRK13197.1"/>
    <property type="match status" value="1"/>
</dbReference>
<dbReference type="NCBIfam" id="TIGR00504">
    <property type="entry name" value="pyro_pdase"/>
    <property type="match status" value="1"/>
</dbReference>
<dbReference type="PANTHER" id="PTHR23402">
    <property type="entry name" value="PROTEASE FAMILY C15 PYROGLUTAMYL-PEPTIDASE I-RELATED"/>
    <property type="match status" value="1"/>
</dbReference>
<dbReference type="PANTHER" id="PTHR23402:SF1">
    <property type="entry name" value="PYROGLUTAMYL-PEPTIDASE I"/>
    <property type="match status" value="1"/>
</dbReference>
<dbReference type="Pfam" id="PF01470">
    <property type="entry name" value="Peptidase_C15"/>
    <property type="match status" value="1"/>
</dbReference>
<dbReference type="PIRSF" id="PIRSF015592">
    <property type="entry name" value="Prld-crbxl_pptds"/>
    <property type="match status" value="1"/>
</dbReference>
<dbReference type="PRINTS" id="PR00706">
    <property type="entry name" value="PYROGLUPTASE"/>
</dbReference>
<dbReference type="SUPFAM" id="SSF53182">
    <property type="entry name" value="Pyrrolidone carboxyl peptidase (pyroglutamate aminopeptidase)"/>
    <property type="match status" value="1"/>
</dbReference>
<dbReference type="PROSITE" id="PS01334">
    <property type="entry name" value="PYRASE_CYS"/>
    <property type="match status" value="1"/>
</dbReference>
<dbReference type="PROSITE" id="PS01333">
    <property type="entry name" value="PYRASE_GLU"/>
    <property type="match status" value="1"/>
</dbReference>
<comment type="function">
    <text evidence="1">Removes 5-oxoproline from various penultimate amino acid residues except L-proline.</text>
</comment>
<comment type="catalytic activity">
    <reaction evidence="1">
        <text>Release of an N-terminal pyroglutamyl group from a polypeptide, the second amino acid generally not being Pro.</text>
        <dbReference type="EC" id="3.4.19.3"/>
    </reaction>
</comment>
<comment type="subunit">
    <text evidence="1">Homotetramer.</text>
</comment>
<comment type="subcellular location">
    <subcellularLocation>
        <location evidence="1">Cytoplasm</location>
    </subcellularLocation>
</comment>
<comment type="similarity">
    <text evidence="1">Belongs to the peptidase C15 family.</text>
</comment>
<feature type="chain" id="PRO_1000050143" description="Pyrrolidone-carboxylate peptidase">
    <location>
        <begin position="1"/>
        <end position="214"/>
    </location>
</feature>
<feature type="active site" evidence="1">
    <location>
        <position position="78"/>
    </location>
</feature>
<feature type="active site" evidence="1">
    <location>
        <position position="141"/>
    </location>
</feature>
<feature type="active site" evidence="1">
    <location>
        <position position="165"/>
    </location>
</feature>
<organism>
    <name type="scientific">Streptococcus pneumoniae serotype 2 (strain D39 / NCTC 7466)</name>
    <dbReference type="NCBI Taxonomy" id="373153"/>
    <lineage>
        <taxon>Bacteria</taxon>
        <taxon>Bacillati</taxon>
        <taxon>Bacillota</taxon>
        <taxon>Bacilli</taxon>
        <taxon>Lactobacillales</taxon>
        <taxon>Streptococcaceae</taxon>
        <taxon>Streptococcus</taxon>
    </lineage>
</organism>
<keyword id="KW-0963">Cytoplasm</keyword>
<keyword id="KW-0378">Hydrolase</keyword>
<keyword id="KW-0645">Protease</keyword>
<keyword id="KW-1185">Reference proteome</keyword>
<keyword id="KW-0788">Thiol protease</keyword>